<proteinExistence type="evidence at protein level"/>
<keyword id="KW-0010">Activator</keyword>
<keyword id="KW-0150">Chloroplast</keyword>
<keyword id="KW-0238">DNA-binding</keyword>
<keyword id="KW-0479">Metal-binding</keyword>
<keyword id="KW-0597">Phosphoprotein</keyword>
<keyword id="KW-0934">Plastid</keyword>
<keyword id="KW-1185">Reference proteome</keyword>
<keyword id="KW-0677">Repeat</keyword>
<keyword id="KW-0804">Transcription</keyword>
<keyword id="KW-0805">Transcription regulation</keyword>
<keyword id="KW-0809">Transit peptide</keyword>
<keyword id="KW-0862">Zinc</keyword>
<keyword id="KW-0863">Zinc-finger</keyword>
<sequence>MAASSSSAASFFGVRQDDQSHLLPPNSSAAAPPPPPPHHQAPLPPLEAPPQKKKRNQPRTPNSDAEVIALSPKTLMATNRFICEVCNKGFQREQNLQLHRRGHNLPWKLKQKSTKEVKRKVYLCPEPSCVHHDPSRALGDLTGIKKHYYRKHGEKKWKCDKCSKRYAVQSDWKAHSKTCGTKEYRCDCGTLFSRRDSFITHRAFCDALAQESARHPTSLTSLPSHHFPYGQNTNNSNNNASSMILGLSHMGAPQNLDHQPGDVLRLGSGGGGGGAASRSSSDLIAANASGYFMQEQNPSFHDQQDHHHHHQQGFLAGNNNIKQSPMSFQQNLMQFSHDNHNSAPSNVFNLSFLSGNNGVTSATSNPNAAAAAAVSSGNLMISNHYDGENAVGGGGEGSTGLFPNNLMSSADRISSGSVPSLFSSSMQSPNSAPHMSATALLQKAAQMGSTSSNNNNGSNTNNNNNASSILRSFGSGIYGENESNLQDLMNSFSNPGATGNVNGVDSPFGSYGGVNKGLSADKQSMTRDFLGVGQIVKSMSGSGGFQQQQQQQQQQQQQQQHGNSRERVGSSSDSADRSSMNVNTGGGPASTSPPYGIHHASF</sequence>
<comment type="function">
    <text evidence="5 6">Transcription factor acting as a positive regulator of the starch synthase SS4. Controls chloroplast development and starch granule formation (PubMed:22898356). Binds DNA via its zinc fingers (PubMed:24821766). Recognizes and binds to SCL3 promoter sequence 5'-AGACAA-3' to promote its expression when in complex with RGA (PubMed:24821766).</text>
</comment>
<comment type="subunit">
    <text evidence="6">Binds to RGA and SCL3 competitively.</text>
</comment>
<comment type="subcellular location">
    <subcellularLocation>
        <location evidence="10">Plastid</location>
        <location evidence="10">Chloroplast</location>
    </subcellularLocation>
</comment>
<comment type="tissue specificity">
    <text evidence="11">Highly expressed in leaf tissues.</text>
</comment>
<comment type="disruption phenotype">
    <text evidence="5">Down-regulation of SS4 during the light period of both short and long day conditions. Deformity of the chloroplasts and their contained starch granules, with an increased number of starch granules per chloroplast.</text>
</comment>
<feature type="transit peptide" description="Chloroplast" evidence="2">
    <location>
        <begin position="1"/>
        <end position="50"/>
    </location>
</feature>
<feature type="chain" id="PRO_0000431541" description="Protein indeterminate-domain 5, chloroplastic">
    <location>
        <begin position="51"/>
        <end position="602"/>
    </location>
</feature>
<feature type="zinc finger region" description="C2H2-type 1" evidence="3">
    <location>
        <begin position="81"/>
        <end position="103"/>
    </location>
</feature>
<feature type="zinc finger region" description="C2H2-type 2" evidence="9">
    <location>
        <begin position="122"/>
        <end position="152"/>
    </location>
</feature>
<feature type="zinc finger region" description="C2H2-type 2; degenerate" evidence="3">
    <location>
        <begin position="157"/>
        <end position="180"/>
    </location>
</feature>
<feature type="zinc finger region" description="CCHC-type 2; atypical" evidence="9">
    <location>
        <begin position="184"/>
        <end position="207"/>
    </location>
</feature>
<feature type="region of interest" description="Disordered" evidence="4">
    <location>
        <begin position="1"/>
        <end position="65"/>
    </location>
</feature>
<feature type="region of interest" description="SHR-binding" evidence="1">
    <location>
        <begin position="194"/>
        <end position="206"/>
    </location>
</feature>
<feature type="region of interest" description="Disordered" evidence="4">
    <location>
        <begin position="443"/>
        <end position="467"/>
    </location>
</feature>
<feature type="region of interest" description="Disordered" evidence="4">
    <location>
        <begin position="537"/>
        <end position="602"/>
    </location>
</feature>
<feature type="compositionally biased region" description="Low complexity" evidence="4">
    <location>
        <begin position="1"/>
        <end position="10"/>
    </location>
</feature>
<feature type="compositionally biased region" description="Low complexity" evidence="4">
    <location>
        <begin position="21"/>
        <end position="30"/>
    </location>
</feature>
<feature type="compositionally biased region" description="Pro residues" evidence="4">
    <location>
        <begin position="31"/>
        <end position="48"/>
    </location>
</feature>
<feature type="compositionally biased region" description="Low complexity" evidence="4">
    <location>
        <begin position="448"/>
        <end position="467"/>
    </location>
</feature>
<feature type="compositionally biased region" description="Low complexity" evidence="4">
    <location>
        <begin position="546"/>
        <end position="560"/>
    </location>
</feature>
<feature type="compositionally biased region" description="Low complexity" evidence="4">
    <location>
        <begin position="570"/>
        <end position="579"/>
    </location>
</feature>
<feature type="binding site" evidence="1">
    <location>
        <position position="159"/>
    </location>
    <ligand>
        <name>Zn(2+)</name>
        <dbReference type="ChEBI" id="CHEBI:29105"/>
        <label>1</label>
    </ligand>
</feature>
<feature type="binding site" evidence="1">
    <location>
        <position position="162"/>
    </location>
    <ligand>
        <name>Zn(2+)</name>
        <dbReference type="ChEBI" id="CHEBI:29105"/>
        <label>1</label>
    </ligand>
</feature>
<feature type="binding site" evidence="1">
    <location>
        <position position="175"/>
    </location>
    <ligand>
        <name>Zn(2+)</name>
        <dbReference type="ChEBI" id="CHEBI:29105"/>
        <label>1</label>
    </ligand>
</feature>
<feature type="binding site" evidence="1">
    <location>
        <position position="179"/>
    </location>
    <ligand>
        <name>Zn(2+)</name>
        <dbReference type="ChEBI" id="CHEBI:29105"/>
        <label>1</label>
    </ligand>
</feature>
<feature type="binding site" evidence="1">
    <location>
        <position position="186"/>
    </location>
    <ligand>
        <name>Zn(2+)</name>
        <dbReference type="ChEBI" id="CHEBI:29105"/>
        <label>2</label>
    </ligand>
</feature>
<feature type="binding site" evidence="1">
    <location>
        <position position="188"/>
    </location>
    <ligand>
        <name>Zn(2+)</name>
        <dbReference type="ChEBI" id="CHEBI:29105"/>
        <label>2</label>
    </ligand>
</feature>
<feature type="binding site" evidence="1">
    <location>
        <position position="201"/>
    </location>
    <ligand>
        <name>Zn(2+)</name>
        <dbReference type="ChEBI" id="CHEBI:29105"/>
        <label>2</label>
    </ligand>
</feature>
<feature type="binding site" evidence="1">
    <location>
        <position position="205"/>
    </location>
    <ligand>
        <name>Zn(2+)</name>
        <dbReference type="ChEBI" id="CHEBI:29105"/>
        <label>2</label>
    </ligand>
</feature>
<feature type="modified residue" description="Phosphothreonine" evidence="15">
    <location>
        <position position="60"/>
    </location>
</feature>
<feature type="modified residue" description="Phosphoserine" evidence="14 15">
    <location>
        <position position="71"/>
    </location>
</feature>
<feature type="sequence conflict" description="In Ref. 4; AAL91203." evidence="9" ref="4">
    <original>AA</original>
    <variation>VV</variation>
    <location>
        <begin position="30"/>
        <end position="31"/>
    </location>
</feature>
<accession>Q9ZUL3</accession>
<accession>Q8RXE0</accession>
<dbReference type="EMBL" id="AJ621495">
    <property type="protein sequence ID" value="CAF18564.1"/>
    <property type="molecule type" value="mRNA"/>
</dbReference>
<dbReference type="EMBL" id="AC005936">
    <property type="protein sequence ID" value="AAC97225.1"/>
    <property type="molecule type" value="Genomic_DNA"/>
</dbReference>
<dbReference type="EMBL" id="CP002685">
    <property type="protein sequence ID" value="AEC05542.1"/>
    <property type="molecule type" value="Genomic_DNA"/>
</dbReference>
<dbReference type="EMBL" id="CP002685">
    <property type="protein sequence ID" value="ANM62239.1"/>
    <property type="molecule type" value="Genomic_DNA"/>
</dbReference>
<dbReference type="EMBL" id="AY056174">
    <property type="protein sequence ID" value="AAL07023.1"/>
    <property type="molecule type" value="mRNA"/>
</dbReference>
<dbReference type="EMBL" id="BT001215">
    <property type="protein sequence ID" value="AAN65102.1"/>
    <property type="molecule type" value="mRNA"/>
</dbReference>
<dbReference type="EMBL" id="AY081314">
    <property type="protein sequence ID" value="AAL91203.1"/>
    <property type="molecule type" value="mRNA"/>
</dbReference>
<dbReference type="PIR" id="F84432">
    <property type="entry name" value="F84432"/>
</dbReference>
<dbReference type="RefSeq" id="NP_001324413.1">
    <property type="nucleotide sequence ID" value="NM_001335091.1"/>
</dbReference>
<dbReference type="RefSeq" id="NP_178316.1">
    <property type="nucleotide sequence ID" value="NM_126268.3"/>
</dbReference>
<dbReference type="FunCoup" id="Q9ZUL3">
    <property type="interactions" value="725"/>
</dbReference>
<dbReference type="IntAct" id="Q9ZUL3">
    <property type="interactions" value="7"/>
</dbReference>
<dbReference type="STRING" id="3702.Q9ZUL3"/>
<dbReference type="GlyGen" id="Q9ZUL3">
    <property type="glycosylation" value="3 sites, 1 O-linked glycan (3 sites)"/>
</dbReference>
<dbReference type="iPTMnet" id="Q9ZUL3"/>
<dbReference type="PaxDb" id="3702-AT2G02070.1"/>
<dbReference type="ProteomicsDB" id="228786"/>
<dbReference type="EnsemblPlants" id="AT2G02070.1">
    <property type="protein sequence ID" value="AT2G02070.1"/>
    <property type="gene ID" value="AT2G02070"/>
</dbReference>
<dbReference type="EnsemblPlants" id="AT2G02070.2">
    <property type="protein sequence ID" value="AT2G02070.2"/>
    <property type="gene ID" value="AT2G02070"/>
</dbReference>
<dbReference type="GeneID" id="814738"/>
<dbReference type="Gramene" id="AT2G02070.1">
    <property type="protein sequence ID" value="AT2G02070.1"/>
    <property type="gene ID" value="AT2G02070"/>
</dbReference>
<dbReference type="Gramene" id="AT2G02070.2">
    <property type="protein sequence ID" value="AT2G02070.2"/>
    <property type="gene ID" value="AT2G02070"/>
</dbReference>
<dbReference type="KEGG" id="ath:AT2G02070"/>
<dbReference type="Araport" id="AT2G02070"/>
<dbReference type="TAIR" id="AT2G02070">
    <property type="gene designation" value="IDD5"/>
</dbReference>
<dbReference type="eggNOG" id="KOG1721">
    <property type="taxonomic scope" value="Eukaryota"/>
</dbReference>
<dbReference type="HOGENOM" id="CLU_014578_3_0_1"/>
<dbReference type="InParanoid" id="Q9ZUL3"/>
<dbReference type="OMA" id="SHMGAPQ"/>
<dbReference type="PhylomeDB" id="Q9ZUL3"/>
<dbReference type="PRO" id="PR:Q9ZUL3"/>
<dbReference type="Proteomes" id="UP000006548">
    <property type="component" value="Chromosome 2"/>
</dbReference>
<dbReference type="ExpressionAtlas" id="Q9ZUL3">
    <property type="expression patterns" value="baseline and differential"/>
</dbReference>
<dbReference type="GO" id="GO:0009507">
    <property type="term" value="C:chloroplast"/>
    <property type="evidence" value="ECO:0007669"/>
    <property type="project" value="UniProtKB-SubCell"/>
</dbReference>
<dbReference type="GO" id="GO:0003700">
    <property type="term" value="F:DNA-binding transcription factor activity"/>
    <property type="evidence" value="ECO:0000314"/>
    <property type="project" value="UniProtKB"/>
</dbReference>
<dbReference type="GO" id="GO:0043565">
    <property type="term" value="F:sequence-specific DNA binding"/>
    <property type="evidence" value="ECO:0000314"/>
    <property type="project" value="UniProtKB"/>
</dbReference>
<dbReference type="GO" id="GO:0000976">
    <property type="term" value="F:transcription cis-regulatory region binding"/>
    <property type="evidence" value="ECO:0000353"/>
    <property type="project" value="TAIR"/>
</dbReference>
<dbReference type="GO" id="GO:0008270">
    <property type="term" value="F:zinc ion binding"/>
    <property type="evidence" value="ECO:0007669"/>
    <property type="project" value="UniProtKB-KW"/>
</dbReference>
<dbReference type="GO" id="GO:0045893">
    <property type="term" value="P:positive regulation of DNA-templated transcription"/>
    <property type="evidence" value="ECO:0000314"/>
    <property type="project" value="UniProtKB"/>
</dbReference>
<dbReference type="GO" id="GO:0006355">
    <property type="term" value="P:regulation of DNA-templated transcription"/>
    <property type="evidence" value="ECO:0000304"/>
    <property type="project" value="TAIR"/>
</dbReference>
<dbReference type="FunFam" id="3.30.160.60:FF:000554">
    <property type="entry name" value="protein indeterminate-domain 12-like"/>
    <property type="match status" value="1"/>
</dbReference>
<dbReference type="FunFam" id="3.30.160.60:FF:000131">
    <property type="entry name" value="protein indeterminate-domain 5, chloroplastic-like"/>
    <property type="match status" value="1"/>
</dbReference>
<dbReference type="Gene3D" id="3.30.160.60">
    <property type="entry name" value="Classic Zinc Finger"/>
    <property type="match status" value="2"/>
</dbReference>
<dbReference type="InterPro" id="IPR055187">
    <property type="entry name" value="C2CH-3rd_BIRD-IDD"/>
</dbReference>
<dbReference type="InterPro" id="IPR055185">
    <property type="entry name" value="C2CH-4th_BIRD-IDD"/>
</dbReference>
<dbReference type="InterPro" id="IPR055186">
    <property type="entry name" value="C2H2-2nd_BIRD-IDD"/>
</dbReference>
<dbReference type="InterPro" id="IPR031140">
    <property type="entry name" value="IDD1-16"/>
</dbReference>
<dbReference type="InterPro" id="IPR036236">
    <property type="entry name" value="Znf_C2H2_sf"/>
</dbReference>
<dbReference type="InterPro" id="IPR013087">
    <property type="entry name" value="Znf_C2H2_type"/>
</dbReference>
<dbReference type="PANTHER" id="PTHR10593:SF214">
    <property type="entry name" value="PROTEIN INDETERMINATE-DOMAIN 5, CHLOROPLASTIC"/>
    <property type="match status" value="1"/>
</dbReference>
<dbReference type="PANTHER" id="PTHR10593">
    <property type="entry name" value="SERINE/THREONINE-PROTEIN KINASE RIO"/>
    <property type="match status" value="1"/>
</dbReference>
<dbReference type="Pfam" id="PF22995">
    <property type="entry name" value="C2CH-3rd_BIRD-IDD"/>
    <property type="match status" value="1"/>
</dbReference>
<dbReference type="Pfam" id="PF22992">
    <property type="entry name" value="C2CH-4th_BIRD-IDD"/>
    <property type="match status" value="1"/>
</dbReference>
<dbReference type="Pfam" id="PF22996">
    <property type="entry name" value="C2H2-2nd_BIRD-IDD"/>
    <property type="match status" value="1"/>
</dbReference>
<dbReference type="Pfam" id="PF12874">
    <property type="entry name" value="zf-met"/>
    <property type="match status" value="1"/>
</dbReference>
<dbReference type="SMART" id="SM00355">
    <property type="entry name" value="ZnF_C2H2"/>
    <property type="match status" value="3"/>
</dbReference>
<dbReference type="SUPFAM" id="SSF57667">
    <property type="entry name" value="beta-beta-alpha zinc fingers"/>
    <property type="match status" value="1"/>
</dbReference>
<dbReference type="PROSITE" id="PS00028">
    <property type="entry name" value="ZINC_FINGER_C2H2_1"/>
    <property type="match status" value="1"/>
</dbReference>
<dbReference type="PROSITE" id="PS50157">
    <property type="entry name" value="ZINC_FINGER_C2H2_2"/>
    <property type="match status" value="1"/>
</dbReference>
<evidence type="ECO:0000250" key="1">
    <source>
        <dbReference type="UniProtKB" id="Q700D2"/>
    </source>
</evidence>
<evidence type="ECO:0000255" key="2"/>
<evidence type="ECO:0000255" key="3">
    <source>
        <dbReference type="PROSITE-ProRule" id="PRU00042"/>
    </source>
</evidence>
<evidence type="ECO:0000256" key="4">
    <source>
        <dbReference type="SAM" id="MobiDB-lite"/>
    </source>
</evidence>
<evidence type="ECO:0000269" key="5">
    <source>
    </source>
</evidence>
<evidence type="ECO:0000269" key="6">
    <source>
    </source>
</evidence>
<evidence type="ECO:0000303" key="7">
    <source>
    </source>
</evidence>
<evidence type="ECO:0000303" key="8">
    <source ref="1"/>
</evidence>
<evidence type="ECO:0000305" key="9"/>
<evidence type="ECO:0000305" key="10">
    <source>
    </source>
</evidence>
<evidence type="ECO:0000305" key="11">
    <source>
    </source>
</evidence>
<evidence type="ECO:0000312" key="12">
    <source>
        <dbReference type="Araport" id="AT2G02070"/>
    </source>
</evidence>
<evidence type="ECO:0000312" key="13">
    <source>
        <dbReference type="EMBL" id="AAC97225.1"/>
    </source>
</evidence>
<evidence type="ECO:0007744" key="14">
    <source>
    </source>
</evidence>
<evidence type="ECO:0007744" key="15">
    <source>
    </source>
</evidence>
<protein>
    <recommendedName>
        <fullName evidence="7">Protein indeterminate-domain 5, chloroplastic</fullName>
    </recommendedName>
    <alternativeName>
        <fullName evidence="8">ID1-like zinc finger protein 2</fullName>
    </alternativeName>
</protein>
<name>IDD5_ARATH</name>
<organism>
    <name type="scientific">Arabidopsis thaliana</name>
    <name type="common">Mouse-ear cress</name>
    <dbReference type="NCBI Taxonomy" id="3702"/>
    <lineage>
        <taxon>Eukaryota</taxon>
        <taxon>Viridiplantae</taxon>
        <taxon>Streptophyta</taxon>
        <taxon>Embryophyta</taxon>
        <taxon>Tracheophyta</taxon>
        <taxon>Spermatophyta</taxon>
        <taxon>Magnoliopsida</taxon>
        <taxon>eudicotyledons</taxon>
        <taxon>Gunneridae</taxon>
        <taxon>Pentapetalae</taxon>
        <taxon>rosids</taxon>
        <taxon>malvids</taxon>
        <taxon>Brassicales</taxon>
        <taxon>Brassicaceae</taxon>
        <taxon>Camelineae</taxon>
        <taxon>Arabidopsis</taxon>
    </lineage>
</organism>
<reference key="1">
    <citation type="submission" date="2004-01" db="EMBL/GenBank/DDBJ databases">
        <title>INDETERMINATE1-like genes in Arabidopsis.</title>
        <authorList>
            <person name="Dewald M."/>
            <person name="Fritz J."/>
            <person name="Merkle T."/>
        </authorList>
    </citation>
    <scope>NUCLEOTIDE SEQUENCE [MRNA]</scope>
    <source>
        <strain>cv. Columbia</strain>
    </source>
</reference>
<reference key="2">
    <citation type="journal article" date="1999" name="Nature">
        <title>Sequence and analysis of chromosome 2 of the plant Arabidopsis thaliana.</title>
        <authorList>
            <person name="Lin X."/>
            <person name="Kaul S."/>
            <person name="Rounsley S.D."/>
            <person name="Shea T.P."/>
            <person name="Benito M.-I."/>
            <person name="Town C.D."/>
            <person name="Fujii C.Y."/>
            <person name="Mason T.M."/>
            <person name="Bowman C.L."/>
            <person name="Barnstead M.E."/>
            <person name="Feldblyum T.V."/>
            <person name="Buell C.R."/>
            <person name="Ketchum K.A."/>
            <person name="Lee J.J."/>
            <person name="Ronning C.M."/>
            <person name="Koo H.L."/>
            <person name="Moffat K.S."/>
            <person name="Cronin L.A."/>
            <person name="Shen M."/>
            <person name="Pai G."/>
            <person name="Van Aken S."/>
            <person name="Umayam L."/>
            <person name="Tallon L.J."/>
            <person name="Gill J.E."/>
            <person name="Adams M.D."/>
            <person name="Carrera A.J."/>
            <person name="Creasy T.H."/>
            <person name="Goodman H.M."/>
            <person name="Somerville C.R."/>
            <person name="Copenhaver G.P."/>
            <person name="Preuss D."/>
            <person name="Nierman W.C."/>
            <person name="White O."/>
            <person name="Eisen J.A."/>
            <person name="Salzberg S.L."/>
            <person name="Fraser C.M."/>
            <person name="Venter J.C."/>
        </authorList>
    </citation>
    <scope>NUCLEOTIDE SEQUENCE [LARGE SCALE GENOMIC DNA]</scope>
    <source>
        <strain>cv. Columbia</strain>
    </source>
</reference>
<reference key="3">
    <citation type="journal article" date="2017" name="Plant J.">
        <title>Araport11: a complete reannotation of the Arabidopsis thaliana reference genome.</title>
        <authorList>
            <person name="Cheng C.Y."/>
            <person name="Krishnakumar V."/>
            <person name="Chan A.P."/>
            <person name="Thibaud-Nissen F."/>
            <person name="Schobel S."/>
            <person name="Town C.D."/>
        </authorList>
    </citation>
    <scope>GENOME REANNOTATION</scope>
    <source>
        <strain>cv. Columbia</strain>
    </source>
</reference>
<reference key="4">
    <citation type="journal article" date="2003" name="Science">
        <title>Empirical analysis of transcriptional activity in the Arabidopsis genome.</title>
        <authorList>
            <person name="Yamada K."/>
            <person name="Lim J."/>
            <person name="Dale J.M."/>
            <person name="Chen H."/>
            <person name="Shinn P."/>
            <person name="Palm C.J."/>
            <person name="Southwick A.M."/>
            <person name="Wu H.C."/>
            <person name="Kim C.J."/>
            <person name="Nguyen M."/>
            <person name="Pham P.K."/>
            <person name="Cheuk R.F."/>
            <person name="Karlin-Newmann G."/>
            <person name="Liu S.X."/>
            <person name="Lam B."/>
            <person name="Sakano H."/>
            <person name="Wu T."/>
            <person name="Yu G."/>
            <person name="Miranda M."/>
            <person name="Quach H.L."/>
            <person name="Tripp M."/>
            <person name="Chang C.H."/>
            <person name="Lee J.M."/>
            <person name="Toriumi M.J."/>
            <person name="Chan M.M."/>
            <person name="Tang C.C."/>
            <person name="Onodera C.S."/>
            <person name="Deng J.M."/>
            <person name="Akiyama K."/>
            <person name="Ansari Y."/>
            <person name="Arakawa T."/>
            <person name="Banh J."/>
            <person name="Banno F."/>
            <person name="Bowser L."/>
            <person name="Brooks S.Y."/>
            <person name="Carninci P."/>
            <person name="Chao Q."/>
            <person name="Choy N."/>
            <person name="Enju A."/>
            <person name="Goldsmith A.D."/>
            <person name="Gurjal M."/>
            <person name="Hansen N.F."/>
            <person name="Hayashizaki Y."/>
            <person name="Johnson-Hopson C."/>
            <person name="Hsuan V.W."/>
            <person name="Iida K."/>
            <person name="Karnes M."/>
            <person name="Khan S."/>
            <person name="Koesema E."/>
            <person name="Ishida J."/>
            <person name="Jiang P.X."/>
            <person name="Jones T."/>
            <person name="Kawai J."/>
            <person name="Kamiya A."/>
            <person name="Meyers C."/>
            <person name="Nakajima M."/>
            <person name="Narusaka M."/>
            <person name="Seki M."/>
            <person name="Sakurai T."/>
            <person name="Satou M."/>
            <person name="Tamse R."/>
            <person name="Vaysberg M."/>
            <person name="Wallender E.K."/>
            <person name="Wong C."/>
            <person name="Yamamura Y."/>
            <person name="Yuan S."/>
            <person name="Shinozaki K."/>
            <person name="Davis R.W."/>
            <person name="Theologis A."/>
            <person name="Ecker J.R."/>
        </authorList>
    </citation>
    <scope>NUCLEOTIDE SEQUENCE [LARGE SCALE MRNA]</scope>
    <source>
        <strain>cv. Columbia</strain>
    </source>
</reference>
<reference key="5">
    <citation type="journal article" date="2006" name="BMC Genomics">
        <title>The maize INDETERMINATE1 flowering time regulator defines a highly conserved zinc finger protein family in higher plants.</title>
        <authorList>
            <person name="Colasanti J."/>
            <person name="Tremblay R."/>
            <person name="Wong A.Y."/>
            <person name="Coneva V."/>
            <person name="Kozaki A."/>
            <person name="Mable B.K."/>
        </authorList>
    </citation>
    <scope>GENE FAMILY</scope>
    <scope>NOMENCLATURE</scope>
</reference>
<reference key="6">
    <citation type="journal article" date="2006" name="Gene">
        <title>Eukaryotic transcription factors in plastids--Bioinformatic assessment and implications for the evolution of gene expression machineries in plants.</title>
        <authorList>
            <person name="Wagner R."/>
            <person name="Pfannschmidt T."/>
        </authorList>
    </citation>
    <scope>SUBCELLULAR LOCATION</scope>
</reference>
<reference key="7">
    <citation type="journal article" date="2009" name="J. Proteomics">
        <title>Phosphoproteomic analysis of nuclei-enriched fractions from Arabidopsis thaliana.</title>
        <authorList>
            <person name="Jones A.M.E."/>
            <person name="MacLean D."/>
            <person name="Studholme D.J."/>
            <person name="Serna-Sanz A."/>
            <person name="Andreasson E."/>
            <person name="Rathjen J.P."/>
            <person name="Peck S.C."/>
        </authorList>
    </citation>
    <scope>PHOSPHORYLATION [LARGE SCALE ANALYSIS] AT SER-71</scope>
    <scope>IDENTIFICATION BY MASS SPECTROMETRY [LARGE SCALE ANALYSIS]</scope>
    <source>
        <strain>cv. Columbia</strain>
    </source>
</reference>
<reference key="8">
    <citation type="journal article" date="2009" name="Plant Physiol.">
        <title>Large-scale Arabidopsis phosphoproteome profiling reveals novel chloroplast kinase substrates and phosphorylation networks.</title>
        <authorList>
            <person name="Reiland S."/>
            <person name="Messerli G."/>
            <person name="Baerenfaller K."/>
            <person name="Gerrits B."/>
            <person name="Endler A."/>
            <person name="Grossmann J."/>
            <person name="Gruissem W."/>
            <person name="Baginsky S."/>
        </authorList>
    </citation>
    <scope>PHOSPHORYLATION [LARGE SCALE ANALYSIS] AT THR-60 AND SER-71</scope>
    <scope>IDENTIFICATION BY MASS SPECTROMETRY [LARGE SCALE ANALYSIS]</scope>
</reference>
<reference key="9">
    <citation type="journal article" date="2012" name="BMC Syst. Biol.">
        <title>Inferring transcriptional gene regulation network of starch metabolism in Arabidopsis thaliana leaves using graphical Gaussian model.</title>
        <authorList>
            <person name="Ingkasuwan P."/>
            <person name="Netrphan S."/>
            <person name="Prasitwattanaseree S."/>
            <person name="Tanticharoen M."/>
            <person name="Bhumiratana S."/>
            <person name="Meechai A."/>
            <person name="Chaijaruwanich J."/>
            <person name="Takahashi H."/>
            <person name="Cheevadhanarak S."/>
        </authorList>
    </citation>
    <scope>FUNCTION</scope>
    <scope>DISRUPTION PHENOTYPE</scope>
    <scope>TISSUE SPECIFICITY</scope>
</reference>
<reference key="10">
    <citation type="journal article" date="2014" name="Proc. Natl. Acad. Sci. U.S.A.">
        <title>DELLA protein functions as a transcriptional activator through the DNA binding of the indeterminate domain family proteins.</title>
        <authorList>
            <person name="Yoshida H."/>
            <person name="Hirano K."/>
            <person name="Sato T."/>
            <person name="Mitsuda N."/>
            <person name="Nomoto M."/>
            <person name="Maeo K."/>
            <person name="Koketsu E."/>
            <person name="Mitani R."/>
            <person name="Kawamura M."/>
            <person name="Ishiguro S."/>
            <person name="Tada Y."/>
            <person name="Ohme-Takagi M."/>
            <person name="Matsuoka M."/>
            <person name="Ueguchi-Tanaka M."/>
        </authorList>
    </citation>
    <scope>FUNCTION</scope>
    <scope>INTERACTION WITH RGA AND SCL3</scope>
</reference>
<gene>
    <name evidence="7" type="primary">IDD5</name>
    <name evidence="8" type="synonym">IDZ2</name>
    <name evidence="12" type="ordered locus">At2g02070</name>
    <name evidence="13" type="ORF">F5O4.16</name>
</gene>